<gene>
    <name evidence="1" type="primary">rplD</name>
    <name type="ordered locus">VIBHAR_00731</name>
</gene>
<evidence type="ECO:0000255" key="1">
    <source>
        <dbReference type="HAMAP-Rule" id="MF_01328"/>
    </source>
</evidence>
<evidence type="ECO:0000256" key="2">
    <source>
        <dbReference type="SAM" id="MobiDB-lite"/>
    </source>
</evidence>
<evidence type="ECO:0000305" key="3"/>
<proteinExistence type="inferred from homology"/>
<protein>
    <recommendedName>
        <fullName evidence="1">Large ribosomal subunit protein uL4</fullName>
    </recommendedName>
    <alternativeName>
        <fullName evidence="3">50S ribosomal protein L4</fullName>
    </alternativeName>
</protein>
<organism>
    <name type="scientific">Vibrio campbellii (strain ATCC BAA-1116)</name>
    <dbReference type="NCBI Taxonomy" id="2902295"/>
    <lineage>
        <taxon>Bacteria</taxon>
        <taxon>Pseudomonadati</taxon>
        <taxon>Pseudomonadota</taxon>
        <taxon>Gammaproteobacteria</taxon>
        <taxon>Vibrionales</taxon>
        <taxon>Vibrionaceae</taxon>
        <taxon>Vibrio</taxon>
    </lineage>
</organism>
<feature type="chain" id="PRO_1000052526" description="Large ribosomal subunit protein uL4">
    <location>
        <begin position="1"/>
        <end position="200"/>
    </location>
</feature>
<feature type="region of interest" description="Disordered" evidence="2">
    <location>
        <begin position="42"/>
        <end position="65"/>
    </location>
</feature>
<sequence length="200" mass="21862">MELMVKGADALTVSETTFGREFNEALVHQVVVAFAAGARQGTRAQKTRSEVSGGGAKPWRQKGTGRARAGTIRSPIWRTGGVTFAAKSQDHSQKVNKKMYRGAMKSILSELVRQERLIVVDNFSVEAPKTKELVAKLKELELTDALIVTSEVDENLFLAARNLYKVDARDVAGIDPVSLIAFDKVVMTAEAVKQVEEMLA</sequence>
<reference key="1">
    <citation type="submission" date="2007-08" db="EMBL/GenBank/DDBJ databases">
        <authorList>
            <consortium name="The Vibrio harveyi Genome Sequencing Project"/>
            <person name="Bassler B."/>
            <person name="Clifton S.W."/>
            <person name="Fulton L."/>
            <person name="Delehaunty K."/>
            <person name="Fronick C."/>
            <person name="Harrison M."/>
            <person name="Markivic C."/>
            <person name="Fulton R."/>
            <person name="Tin-Wollam A.-M."/>
            <person name="Shah N."/>
            <person name="Pepin K."/>
            <person name="Nash W."/>
            <person name="Thiruvilangam P."/>
            <person name="Bhonagiri V."/>
            <person name="Waters C."/>
            <person name="Tu K.C."/>
            <person name="Irgon J."/>
            <person name="Wilson R.K."/>
        </authorList>
    </citation>
    <scope>NUCLEOTIDE SEQUENCE [LARGE SCALE GENOMIC DNA]</scope>
    <source>
        <strain>ATCC BAA-1116 / BB120</strain>
    </source>
</reference>
<comment type="function">
    <text evidence="1">One of the primary rRNA binding proteins, this protein initially binds near the 5'-end of the 23S rRNA. It is important during the early stages of 50S assembly. It makes multiple contacts with different domains of the 23S rRNA in the assembled 50S subunit and ribosome.</text>
</comment>
<comment type="function">
    <text evidence="1">Forms part of the polypeptide exit tunnel.</text>
</comment>
<comment type="subunit">
    <text evidence="1">Part of the 50S ribosomal subunit.</text>
</comment>
<comment type="similarity">
    <text evidence="1">Belongs to the universal ribosomal protein uL4 family.</text>
</comment>
<dbReference type="EMBL" id="CP000789">
    <property type="protein sequence ID" value="ABU69732.1"/>
    <property type="molecule type" value="Genomic_DNA"/>
</dbReference>
<dbReference type="RefSeq" id="WP_012126875.1">
    <property type="nucleotide sequence ID" value="NC_009783.1"/>
</dbReference>
<dbReference type="SMR" id="A7MWI4"/>
<dbReference type="KEGG" id="vha:VIBHAR_00731"/>
<dbReference type="PATRIC" id="fig|338187.25.peg.1883"/>
<dbReference type="Proteomes" id="UP000008152">
    <property type="component" value="Chromosome I"/>
</dbReference>
<dbReference type="GO" id="GO:1990904">
    <property type="term" value="C:ribonucleoprotein complex"/>
    <property type="evidence" value="ECO:0007669"/>
    <property type="project" value="UniProtKB-KW"/>
</dbReference>
<dbReference type="GO" id="GO:0005840">
    <property type="term" value="C:ribosome"/>
    <property type="evidence" value="ECO:0007669"/>
    <property type="project" value="UniProtKB-KW"/>
</dbReference>
<dbReference type="GO" id="GO:0019843">
    <property type="term" value="F:rRNA binding"/>
    <property type="evidence" value="ECO:0007669"/>
    <property type="project" value="UniProtKB-UniRule"/>
</dbReference>
<dbReference type="GO" id="GO:0003735">
    <property type="term" value="F:structural constituent of ribosome"/>
    <property type="evidence" value="ECO:0007669"/>
    <property type="project" value="InterPro"/>
</dbReference>
<dbReference type="GO" id="GO:0006412">
    <property type="term" value="P:translation"/>
    <property type="evidence" value="ECO:0007669"/>
    <property type="project" value="UniProtKB-UniRule"/>
</dbReference>
<dbReference type="FunFam" id="3.40.1370.10:FF:000001">
    <property type="entry name" value="50S ribosomal protein L4"/>
    <property type="match status" value="1"/>
</dbReference>
<dbReference type="Gene3D" id="3.40.1370.10">
    <property type="match status" value="1"/>
</dbReference>
<dbReference type="HAMAP" id="MF_01328_B">
    <property type="entry name" value="Ribosomal_uL4_B"/>
    <property type="match status" value="1"/>
</dbReference>
<dbReference type="InterPro" id="IPR002136">
    <property type="entry name" value="Ribosomal_uL4"/>
</dbReference>
<dbReference type="InterPro" id="IPR013005">
    <property type="entry name" value="Ribosomal_uL4-like"/>
</dbReference>
<dbReference type="InterPro" id="IPR023574">
    <property type="entry name" value="Ribosomal_uL4_dom_sf"/>
</dbReference>
<dbReference type="NCBIfam" id="TIGR03953">
    <property type="entry name" value="rplD_bact"/>
    <property type="match status" value="1"/>
</dbReference>
<dbReference type="PANTHER" id="PTHR10746">
    <property type="entry name" value="50S RIBOSOMAL PROTEIN L4"/>
    <property type="match status" value="1"/>
</dbReference>
<dbReference type="PANTHER" id="PTHR10746:SF6">
    <property type="entry name" value="LARGE RIBOSOMAL SUBUNIT PROTEIN UL4M"/>
    <property type="match status" value="1"/>
</dbReference>
<dbReference type="Pfam" id="PF00573">
    <property type="entry name" value="Ribosomal_L4"/>
    <property type="match status" value="1"/>
</dbReference>
<dbReference type="SUPFAM" id="SSF52166">
    <property type="entry name" value="Ribosomal protein L4"/>
    <property type="match status" value="1"/>
</dbReference>
<accession>A7MWI4</accession>
<keyword id="KW-0687">Ribonucleoprotein</keyword>
<keyword id="KW-0689">Ribosomal protein</keyword>
<keyword id="KW-0694">RNA-binding</keyword>
<keyword id="KW-0699">rRNA-binding</keyword>
<name>RL4_VIBC1</name>